<reference key="1">
    <citation type="journal article" date="2016" name="Stand. Genomic Sci.">
        <title>Complete genome sequence of Methanospirillum hungatei type strain JF1.</title>
        <authorList>
            <person name="Gunsalus R.P."/>
            <person name="Cook L.E."/>
            <person name="Crable B."/>
            <person name="Rohlin L."/>
            <person name="McDonald E."/>
            <person name="Mouttaki H."/>
            <person name="Sieber J.R."/>
            <person name="Poweleit N."/>
            <person name="Zhou H."/>
            <person name="Lapidus A.L."/>
            <person name="Daligault H.E."/>
            <person name="Land M."/>
            <person name="Gilna P."/>
            <person name="Ivanova N."/>
            <person name="Kyrpides N."/>
            <person name="Culley D.E."/>
            <person name="McInerney M.J."/>
        </authorList>
    </citation>
    <scope>NUCLEOTIDE SEQUENCE [LARGE SCALE GENOMIC DNA]</scope>
    <source>
        <strain>ATCC 27890 / DSM 864 / NBRC 100397 / JF-1</strain>
    </source>
</reference>
<dbReference type="EMBL" id="CP000254">
    <property type="protein sequence ID" value="ABD42590.1"/>
    <property type="molecule type" value="Genomic_DNA"/>
</dbReference>
<dbReference type="RefSeq" id="WP_011449843.1">
    <property type="nucleotide sequence ID" value="NC_007796.1"/>
</dbReference>
<dbReference type="SMR" id="Q2FTA2"/>
<dbReference type="FunCoup" id="Q2FTA2">
    <property type="interactions" value="132"/>
</dbReference>
<dbReference type="STRING" id="323259.Mhun_2898"/>
<dbReference type="EnsemblBacteria" id="ABD42590">
    <property type="protein sequence ID" value="ABD42590"/>
    <property type="gene ID" value="Mhun_2898"/>
</dbReference>
<dbReference type="GeneID" id="3924459"/>
<dbReference type="KEGG" id="mhu:Mhun_2898"/>
<dbReference type="eggNOG" id="arCOG00780">
    <property type="taxonomic scope" value="Archaea"/>
</dbReference>
<dbReference type="HOGENOM" id="CLU_146465_0_0_2"/>
<dbReference type="InParanoid" id="Q2FTA2"/>
<dbReference type="OrthoDB" id="11309at2157"/>
<dbReference type="Proteomes" id="UP000001941">
    <property type="component" value="Chromosome"/>
</dbReference>
<dbReference type="GO" id="GO:0022625">
    <property type="term" value="C:cytosolic large ribosomal subunit"/>
    <property type="evidence" value="ECO:0007669"/>
    <property type="project" value="TreeGrafter"/>
</dbReference>
<dbReference type="GO" id="GO:0003723">
    <property type="term" value="F:RNA binding"/>
    <property type="evidence" value="ECO:0007669"/>
    <property type="project" value="TreeGrafter"/>
</dbReference>
<dbReference type="GO" id="GO:0003735">
    <property type="term" value="F:structural constituent of ribosome"/>
    <property type="evidence" value="ECO:0007669"/>
    <property type="project" value="InterPro"/>
</dbReference>
<dbReference type="GO" id="GO:0006412">
    <property type="term" value="P:translation"/>
    <property type="evidence" value="ECO:0007669"/>
    <property type="project" value="UniProtKB-UniRule"/>
</dbReference>
<dbReference type="Gene3D" id="3.100.10.10">
    <property type="match status" value="1"/>
</dbReference>
<dbReference type="HAMAP" id="MF_00329">
    <property type="entry name" value="Ribosomal_eL18"/>
    <property type="match status" value="1"/>
</dbReference>
<dbReference type="InterPro" id="IPR000039">
    <property type="entry name" value="Ribosomal_eL18"/>
</dbReference>
<dbReference type="InterPro" id="IPR022947">
    <property type="entry name" value="Ribosomal_eL18_arc"/>
</dbReference>
<dbReference type="InterPro" id="IPR021131">
    <property type="entry name" value="Ribosomal_uL15/eL18"/>
</dbReference>
<dbReference type="InterPro" id="IPR036227">
    <property type="entry name" value="Ribosomal_uL15/eL18_sf"/>
</dbReference>
<dbReference type="NCBIfam" id="NF003079">
    <property type="entry name" value="PRK04005.1"/>
    <property type="match status" value="1"/>
</dbReference>
<dbReference type="PANTHER" id="PTHR10934">
    <property type="entry name" value="60S RIBOSOMAL PROTEIN L18"/>
    <property type="match status" value="1"/>
</dbReference>
<dbReference type="PANTHER" id="PTHR10934:SF2">
    <property type="entry name" value="LARGE RIBOSOMAL SUBUNIT PROTEIN EL18"/>
    <property type="match status" value="1"/>
</dbReference>
<dbReference type="Pfam" id="PF17135">
    <property type="entry name" value="Ribosomal_L18"/>
    <property type="match status" value="1"/>
</dbReference>
<dbReference type="SUPFAM" id="SSF52080">
    <property type="entry name" value="Ribosomal proteins L15p and L18e"/>
    <property type="match status" value="1"/>
</dbReference>
<keyword id="KW-1185">Reference proteome</keyword>
<keyword id="KW-0687">Ribonucleoprotein</keyword>
<keyword id="KW-0689">Ribosomal protein</keyword>
<organism>
    <name type="scientific">Methanospirillum hungatei JF-1 (strain ATCC 27890 / DSM 864 / NBRC 100397 / JF-1)</name>
    <dbReference type="NCBI Taxonomy" id="323259"/>
    <lineage>
        <taxon>Archaea</taxon>
        <taxon>Methanobacteriati</taxon>
        <taxon>Methanobacteriota</taxon>
        <taxon>Stenosarchaea group</taxon>
        <taxon>Methanomicrobia</taxon>
        <taxon>Methanomicrobiales</taxon>
        <taxon>Methanospirillaceae</taxon>
        <taxon>Methanospirillum</taxon>
    </lineage>
</organism>
<gene>
    <name evidence="1" type="primary">rpl18e</name>
    <name type="ordered locus">Mhun_2898</name>
</gene>
<sequence>MTRRNDKSNPRLAELIRLLKQTSRENEVEIWSDIASRLEKSRKNYAEVNVSKINRYAQEGETLIVPGKVLGSGVVEAGVTVAALSFSDAAVSKITEAKGQCISIEQLLSQNPKGSRTRILR</sequence>
<evidence type="ECO:0000255" key="1">
    <source>
        <dbReference type="HAMAP-Rule" id="MF_00329"/>
    </source>
</evidence>
<evidence type="ECO:0000305" key="2"/>
<comment type="similarity">
    <text evidence="1">Belongs to the eukaryotic ribosomal protein eL18 family.</text>
</comment>
<proteinExistence type="inferred from homology"/>
<protein>
    <recommendedName>
        <fullName evidence="1">Large ribosomal subunit protein eL18</fullName>
    </recommendedName>
    <alternativeName>
        <fullName evidence="2">50S ribosomal protein L18e</fullName>
    </alternativeName>
</protein>
<accession>Q2FTA2</accession>
<name>RL18E_METHJ</name>
<feature type="chain" id="PRO_1000005043" description="Large ribosomal subunit protein eL18">
    <location>
        <begin position="1"/>
        <end position="121"/>
    </location>
</feature>